<gene>
    <name evidence="1" type="primary">rpsB</name>
    <name type="ordered locus">VC_2260</name>
</gene>
<feature type="chain" id="PRO_0000134271" description="Small ribosomal subunit protein uS2">
    <location>
        <begin position="1"/>
        <end position="242"/>
    </location>
</feature>
<name>RS2_VIBCH</name>
<organism>
    <name type="scientific">Vibrio cholerae serotype O1 (strain ATCC 39315 / El Tor Inaba N16961)</name>
    <dbReference type="NCBI Taxonomy" id="243277"/>
    <lineage>
        <taxon>Bacteria</taxon>
        <taxon>Pseudomonadati</taxon>
        <taxon>Pseudomonadota</taxon>
        <taxon>Gammaproteobacteria</taxon>
        <taxon>Vibrionales</taxon>
        <taxon>Vibrionaceae</taxon>
        <taxon>Vibrio</taxon>
    </lineage>
</organism>
<reference key="1">
    <citation type="journal article" date="2000" name="Nature">
        <title>DNA sequence of both chromosomes of the cholera pathogen Vibrio cholerae.</title>
        <authorList>
            <person name="Heidelberg J.F."/>
            <person name="Eisen J.A."/>
            <person name="Nelson W.C."/>
            <person name="Clayton R.A."/>
            <person name="Gwinn M.L."/>
            <person name="Dodson R.J."/>
            <person name="Haft D.H."/>
            <person name="Hickey E.K."/>
            <person name="Peterson J.D."/>
            <person name="Umayam L.A."/>
            <person name="Gill S.R."/>
            <person name="Nelson K.E."/>
            <person name="Read T.D."/>
            <person name="Tettelin H."/>
            <person name="Richardson D.L."/>
            <person name="Ermolaeva M.D."/>
            <person name="Vamathevan J.J."/>
            <person name="Bass S."/>
            <person name="Qin H."/>
            <person name="Dragoi I."/>
            <person name="Sellers P."/>
            <person name="McDonald L.A."/>
            <person name="Utterback T.R."/>
            <person name="Fleischmann R.D."/>
            <person name="Nierman W.C."/>
            <person name="White O."/>
            <person name="Salzberg S.L."/>
            <person name="Smith H.O."/>
            <person name="Colwell R.R."/>
            <person name="Mekalanos J.J."/>
            <person name="Venter J.C."/>
            <person name="Fraser C.M."/>
        </authorList>
    </citation>
    <scope>NUCLEOTIDE SEQUENCE [LARGE SCALE GENOMIC DNA]</scope>
    <source>
        <strain>ATCC 39315 / El Tor Inaba N16961</strain>
    </source>
</reference>
<evidence type="ECO:0000255" key="1">
    <source>
        <dbReference type="HAMAP-Rule" id="MF_00291"/>
    </source>
</evidence>
<evidence type="ECO:0000305" key="2"/>
<comment type="similarity">
    <text evidence="1">Belongs to the universal ribosomal protein uS2 family.</text>
</comment>
<keyword id="KW-1185">Reference proteome</keyword>
<keyword id="KW-0687">Ribonucleoprotein</keyword>
<keyword id="KW-0689">Ribosomal protein</keyword>
<accession>Q9KPV2</accession>
<protein>
    <recommendedName>
        <fullName evidence="1">Small ribosomal subunit protein uS2</fullName>
    </recommendedName>
    <alternativeName>
        <fullName evidence="2">30S ribosomal protein S2</fullName>
    </alternativeName>
</protein>
<sequence>MASVSMRDMLTAGVHFGHQTRYWNPKMKQFIFGARNRVHIINLEKTVPMFNEALAELAKVGEKKGKVLFVGTKRAASESVKEAALASNQYYVNNRWLGGMLTNWKTVRQSIKRLKELEVQSTDGTFDKLTKKEALMRTREMEKLEKSLGGIKDMGGLPDALFVIDADHEHIAIKEANNLGIPVFAVVDTNSSPDGVDYIIPGNDDAIRAVQLYLNAAAQAINEGRNKDVAAVAEKDGFVEAE</sequence>
<dbReference type="EMBL" id="AE003852">
    <property type="protein sequence ID" value="AAF95404.1"/>
    <property type="molecule type" value="Genomic_DNA"/>
</dbReference>
<dbReference type="PIR" id="C82097">
    <property type="entry name" value="C82097"/>
</dbReference>
<dbReference type="RefSeq" id="NP_231891.1">
    <property type="nucleotide sequence ID" value="NC_002505.1"/>
</dbReference>
<dbReference type="RefSeq" id="WP_000179228.1">
    <property type="nucleotide sequence ID" value="NZ_LT906614.1"/>
</dbReference>
<dbReference type="SMR" id="Q9KPV2"/>
<dbReference type="STRING" id="243277.VC_2260"/>
<dbReference type="DNASU" id="2613182"/>
<dbReference type="EnsemblBacteria" id="AAF95404">
    <property type="protein sequence ID" value="AAF95404"/>
    <property type="gene ID" value="VC_2260"/>
</dbReference>
<dbReference type="GeneID" id="89513745"/>
<dbReference type="KEGG" id="vch:VC_2260"/>
<dbReference type="PATRIC" id="fig|243277.26.peg.2156"/>
<dbReference type="eggNOG" id="COG0052">
    <property type="taxonomic scope" value="Bacteria"/>
</dbReference>
<dbReference type="HOGENOM" id="CLU_040318_1_2_6"/>
<dbReference type="Proteomes" id="UP000000584">
    <property type="component" value="Chromosome 1"/>
</dbReference>
<dbReference type="GO" id="GO:0022627">
    <property type="term" value="C:cytosolic small ribosomal subunit"/>
    <property type="evidence" value="ECO:0000318"/>
    <property type="project" value="GO_Central"/>
</dbReference>
<dbReference type="GO" id="GO:0003735">
    <property type="term" value="F:structural constituent of ribosome"/>
    <property type="evidence" value="ECO:0000318"/>
    <property type="project" value="GO_Central"/>
</dbReference>
<dbReference type="GO" id="GO:0006412">
    <property type="term" value="P:translation"/>
    <property type="evidence" value="ECO:0007669"/>
    <property type="project" value="UniProtKB-UniRule"/>
</dbReference>
<dbReference type="CDD" id="cd01425">
    <property type="entry name" value="RPS2"/>
    <property type="match status" value="1"/>
</dbReference>
<dbReference type="FunFam" id="1.10.287.610:FF:000001">
    <property type="entry name" value="30S ribosomal protein S2"/>
    <property type="match status" value="1"/>
</dbReference>
<dbReference type="Gene3D" id="3.40.50.10490">
    <property type="entry name" value="Glucose-6-phosphate isomerase like protein, domain 1"/>
    <property type="match status" value="1"/>
</dbReference>
<dbReference type="Gene3D" id="1.10.287.610">
    <property type="entry name" value="Helix hairpin bin"/>
    <property type="match status" value="1"/>
</dbReference>
<dbReference type="HAMAP" id="MF_00291_B">
    <property type="entry name" value="Ribosomal_uS2_B"/>
    <property type="match status" value="1"/>
</dbReference>
<dbReference type="InterPro" id="IPR001865">
    <property type="entry name" value="Ribosomal_uS2"/>
</dbReference>
<dbReference type="InterPro" id="IPR005706">
    <property type="entry name" value="Ribosomal_uS2_bac/mit/plastid"/>
</dbReference>
<dbReference type="InterPro" id="IPR018130">
    <property type="entry name" value="Ribosomal_uS2_CS"/>
</dbReference>
<dbReference type="InterPro" id="IPR023591">
    <property type="entry name" value="Ribosomal_uS2_flav_dom_sf"/>
</dbReference>
<dbReference type="NCBIfam" id="TIGR01011">
    <property type="entry name" value="rpsB_bact"/>
    <property type="match status" value="1"/>
</dbReference>
<dbReference type="PANTHER" id="PTHR12534">
    <property type="entry name" value="30S RIBOSOMAL PROTEIN S2 PROKARYOTIC AND ORGANELLAR"/>
    <property type="match status" value="1"/>
</dbReference>
<dbReference type="PANTHER" id="PTHR12534:SF0">
    <property type="entry name" value="SMALL RIBOSOMAL SUBUNIT PROTEIN US2M"/>
    <property type="match status" value="1"/>
</dbReference>
<dbReference type="Pfam" id="PF00318">
    <property type="entry name" value="Ribosomal_S2"/>
    <property type="match status" value="1"/>
</dbReference>
<dbReference type="PRINTS" id="PR00395">
    <property type="entry name" value="RIBOSOMALS2"/>
</dbReference>
<dbReference type="SUPFAM" id="SSF52313">
    <property type="entry name" value="Ribosomal protein S2"/>
    <property type="match status" value="1"/>
</dbReference>
<dbReference type="PROSITE" id="PS00962">
    <property type="entry name" value="RIBOSOMAL_S2_1"/>
    <property type="match status" value="1"/>
</dbReference>
<dbReference type="PROSITE" id="PS00963">
    <property type="entry name" value="RIBOSOMAL_S2_2"/>
    <property type="match status" value="1"/>
</dbReference>
<proteinExistence type="inferred from homology"/>